<evidence type="ECO:0000250" key="1"/>
<evidence type="ECO:0000250" key="2">
    <source>
        <dbReference type="UniProtKB" id="P37412"/>
    </source>
</evidence>
<evidence type="ECO:0000250" key="3">
    <source>
        <dbReference type="UniProtKB" id="Q51945"/>
    </source>
</evidence>
<evidence type="ECO:0000305" key="4"/>
<geneLocation type="plasmid">
    <name>pTrAB4</name>
</geneLocation>
<geneLocation type="plasmid">
    <name>pTiAB3</name>
</geneLocation>
<gene>
    <name type="primary">ttuC</name>
</gene>
<comment type="function">
    <text evidence="3">Has multiple catalytic activities. Apart from catalyzing the oxidation of (+)-tartrate to oxaloglycolate, also converts meso-tartrate to D-glycerate and catalyzes the oxidative decarboxylation of D-malate to pyruvate.</text>
</comment>
<comment type="catalytic activity">
    <reaction evidence="3">
        <text>tartrate + NAD(+) = 2-hydroxy-3-oxosuccinate + NADH + H(+)</text>
        <dbReference type="Rhea" id="RHEA:18853"/>
        <dbReference type="ChEBI" id="CHEBI:15378"/>
        <dbReference type="ChEBI" id="CHEBI:30929"/>
        <dbReference type="ChEBI" id="CHEBI:57540"/>
        <dbReference type="ChEBI" id="CHEBI:57945"/>
        <dbReference type="ChEBI" id="CHEBI:58265"/>
        <dbReference type="EC" id="1.1.1.93"/>
    </reaction>
</comment>
<comment type="catalytic activity">
    <reaction evidence="3">
        <text>(2R,3S)-tartrate + NAD(+) = 2-hydroxy-3-oxosuccinate + NADH + H(+)</text>
        <dbReference type="Rhea" id="RHEA:16457"/>
        <dbReference type="ChEBI" id="CHEBI:15378"/>
        <dbReference type="ChEBI" id="CHEBI:30928"/>
        <dbReference type="ChEBI" id="CHEBI:57540"/>
        <dbReference type="ChEBI" id="CHEBI:57945"/>
        <dbReference type="ChEBI" id="CHEBI:58265"/>
        <dbReference type="EC" id="1.1.1.93"/>
    </reaction>
</comment>
<comment type="catalytic activity">
    <reaction evidence="3">
        <text>(2R,3R)-tartrate + NAD(+) = 2-hydroxy-3-oxosuccinate + NADH + H(+)</text>
        <dbReference type="Rhea" id="RHEA:15209"/>
        <dbReference type="ChEBI" id="CHEBI:15378"/>
        <dbReference type="ChEBI" id="CHEBI:30924"/>
        <dbReference type="ChEBI" id="CHEBI:57540"/>
        <dbReference type="ChEBI" id="CHEBI:57945"/>
        <dbReference type="ChEBI" id="CHEBI:58265"/>
        <dbReference type="EC" id="1.1.1.93"/>
    </reaction>
</comment>
<comment type="catalytic activity">
    <reaction evidence="3">
        <text>(2R,3R)-tartrate + H(+) = (R)-glycerate + CO2</text>
        <dbReference type="Rhea" id="RHEA:13317"/>
        <dbReference type="ChEBI" id="CHEBI:15378"/>
        <dbReference type="ChEBI" id="CHEBI:16526"/>
        <dbReference type="ChEBI" id="CHEBI:16659"/>
        <dbReference type="ChEBI" id="CHEBI:30924"/>
        <dbReference type="EC" id="4.1.1.73"/>
    </reaction>
</comment>
<comment type="catalytic activity">
    <reaction evidence="3">
        <text>(R)-malate + NAD(+) = pyruvate + CO2 + NADH</text>
        <dbReference type="Rhea" id="RHEA:18365"/>
        <dbReference type="ChEBI" id="CHEBI:15361"/>
        <dbReference type="ChEBI" id="CHEBI:15588"/>
        <dbReference type="ChEBI" id="CHEBI:16526"/>
        <dbReference type="ChEBI" id="CHEBI:57540"/>
        <dbReference type="ChEBI" id="CHEBI:57945"/>
        <dbReference type="EC" id="1.1.1.83"/>
    </reaction>
</comment>
<comment type="cofactor">
    <cofactor evidence="3">
        <name>Mg(2+)</name>
        <dbReference type="ChEBI" id="CHEBI:18420"/>
    </cofactor>
    <cofactor evidence="3">
        <name>Mn(2+)</name>
        <dbReference type="ChEBI" id="CHEBI:29035"/>
    </cofactor>
    <text evidence="2">Binds 1 Mg(2+) or Mn(2+) ion per subunit.</text>
</comment>
<comment type="cofactor">
    <cofactor evidence="3">
        <name>K(+)</name>
        <dbReference type="ChEBI" id="CHEBI:29103"/>
    </cofactor>
</comment>
<comment type="pathway">
    <text>Carbohydrate acid metabolism; tartrate degradation; 2-hydroxy-3-oxosuccinate from L-tartrate: step 1/1.</text>
</comment>
<comment type="pathway">
    <text>Carbohydrate acid metabolism; tartrate degradation; 2-hydroxy-3-oxosuccinate from meso-tartrate: step 1/1.</text>
</comment>
<comment type="pathway">
    <text>Carbohydrate acid metabolism; tartrate degradation; D-glycerate from L-tartrate: step 1/1.</text>
</comment>
<comment type="subcellular location">
    <subcellularLocation>
        <location evidence="1">Cytoplasm</location>
    </subcellularLocation>
</comment>
<comment type="induction">
    <text>By tartrate.</text>
</comment>
<comment type="similarity">
    <text evidence="4">Belongs to the isocitrate and isopropylmalate dehydrogenases family.</text>
</comment>
<keyword id="KW-0963">Cytoplasm</keyword>
<keyword id="KW-0456">Lyase</keyword>
<keyword id="KW-0464">Manganese</keyword>
<keyword id="KW-0479">Metal-binding</keyword>
<keyword id="KW-0520">NAD</keyword>
<keyword id="KW-0560">Oxidoreductase</keyword>
<keyword id="KW-0614">Plasmid</keyword>
<organism>
    <name type="scientific">Agrobacterium vitis</name>
    <name type="common">Rhizobium vitis</name>
    <dbReference type="NCBI Taxonomy" id="373"/>
    <lineage>
        <taxon>Bacteria</taxon>
        <taxon>Pseudomonadati</taxon>
        <taxon>Pseudomonadota</taxon>
        <taxon>Alphaproteobacteria</taxon>
        <taxon>Hyphomicrobiales</taxon>
        <taxon>Rhizobiaceae</taxon>
        <taxon>Rhizobium/Agrobacterium group</taxon>
        <taxon>Agrobacterium</taxon>
    </lineage>
</organism>
<proteinExistence type="evidence at transcript level"/>
<accession>Q44471</accession>
<sequence>MREYKIAAIPADGIGPEVIAAGLQVLEALEQRSGDFKIHTETFDWGSDYYKKHGVMMPADGLDKLKKFDAIFFGAVGAPDVPDHITLWGLRLPICQGFDQYANVRPTKILPGITPPLRNCGPGDLDWVIVRENSEGEYSGHGGRAHRGLPEEVGTEVAIFTRVGVTRIMRYAFKLAQARPRKLLTVVTKSNAQRHGMVMWDEIAAEVATEFPDVTWDKMLVDAMTVRMTLKPETLDTIVATNLHADILSDLAGALAGSLGVAPTANIDPERRFPSMFEPIHGSAFDITGKGIANPIATFWTAAQMLEHLGERDAAARLMSAVERVTEAGILTPDVGGTANTRQVTEAVCNAIAGSNILKMAAAE</sequence>
<protein>
    <recommendedName>
        <fullName>Probable tartrate dehydrogenase/decarboxylase TtuC</fullName>
        <shortName>TDH</shortName>
        <ecNumber evidence="3">1.1.1.93</ecNumber>
        <ecNumber evidence="3">4.1.1.73</ecNumber>
    </recommendedName>
    <alternativeName>
        <fullName>D-malate dehydrogenase [decarboxylating]</fullName>
        <ecNumber evidence="3">1.1.1.83</ecNumber>
    </alternativeName>
</protein>
<reference key="1">
    <citation type="journal article" date="1995" name="J. Bacteriol.">
        <title>Sequence and mutational analysis of a tartrate utilization operon from Agrobacterium vitis.</title>
        <authorList>
            <person name="Crouzet P."/>
            <person name="Otten L."/>
        </authorList>
    </citation>
    <scope>NUCLEOTIDE SEQUENCE [GENOMIC DNA]</scope>
    <source>
        <strain>AB4</strain>
        <plasmid>pTrAB4</plasmid>
    </source>
</reference>
<reference key="2">
    <citation type="submission" date="1997-08" db="EMBL/GenBank/DDBJ databases">
        <authorList>
            <person name="Salomone J.-Y."/>
            <person name="Szegedi E."/>
            <person name="Cobanov P."/>
            <person name="Otten L."/>
        </authorList>
    </citation>
    <scope>NUCLEOTIDE SEQUENCE [GENOMIC DNA]</scope>
    <source>
        <strain>AB3</strain>
        <plasmid>pTiAB3</plasmid>
    </source>
</reference>
<name>TTUC1_AGRVI</name>
<dbReference type="EC" id="1.1.1.93" evidence="3"/>
<dbReference type="EC" id="4.1.1.73" evidence="3"/>
<dbReference type="EC" id="1.1.1.83" evidence="3"/>
<dbReference type="EMBL" id="U25634">
    <property type="protein sequence ID" value="AAA68698.1"/>
    <property type="molecule type" value="Genomic_DNA"/>
</dbReference>
<dbReference type="EMBL" id="AF010262">
    <property type="protein sequence ID" value="AAB65747.1"/>
    <property type="molecule type" value="Genomic_DNA"/>
</dbReference>
<dbReference type="RefSeq" id="WP_032489007.1">
    <property type="nucleotide sequence ID" value="NZ_WPID01000009.1"/>
</dbReference>
<dbReference type="SMR" id="Q44471"/>
<dbReference type="OrthoDB" id="9767905at2"/>
<dbReference type="UniPathway" id="UPA00839">
    <property type="reaction ID" value="UER00800"/>
</dbReference>
<dbReference type="UniPathway" id="UPA00839">
    <property type="reaction ID" value="UER00801"/>
</dbReference>
<dbReference type="UniPathway" id="UPA00839">
    <property type="reaction ID" value="UER00803"/>
</dbReference>
<dbReference type="GO" id="GO:0005737">
    <property type="term" value="C:cytoplasm"/>
    <property type="evidence" value="ECO:0007669"/>
    <property type="project" value="UniProtKB-SubCell"/>
</dbReference>
<dbReference type="GO" id="GO:0046553">
    <property type="term" value="F:D-malate dehydrogenase (decarboxylating) (NAD+) activity"/>
    <property type="evidence" value="ECO:0007669"/>
    <property type="project" value="UniProtKB-EC"/>
</dbReference>
<dbReference type="GO" id="GO:0000287">
    <property type="term" value="F:magnesium ion binding"/>
    <property type="evidence" value="ECO:0007669"/>
    <property type="project" value="InterPro"/>
</dbReference>
<dbReference type="GO" id="GO:0051287">
    <property type="term" value="F:NAD binding"/>
    <property type="evidence" value="ECO:0007669"/>
    <property type="project" value="InterPro"/>
</dbReference>
<dbReference type="GO" id="GO:0050319">
    <property type="term" value="F:tartrate decarboxylase activity"/>
    <property type="evidence" value="ECO:0007669"/>
    <property type="project" value="UniProtKB-EC"/>
</dbReference>
<dbReference type="GO" id="GO:0009027">
    <property type="term" value="F:tartrate dehydrogenase activity"/>
    <property type="evidence" value="ECO:0007669"/>
    <property type="project" value="UniProtKB-EC"/>
</dbReference>
<dbReference type="Gene3D" id="3.40.718.10">
    <property type="entry name" value="Isopropylmalate Dehydrogenase"/>
    <property type="match status" value="1"/>
</dbReference>
<dbReference type="InterPro" id="IPR050501">
    <property type="entry name" value="ICDH/IPMDH"/>
</dbReference>
<dbReference type="InterPro" id="IPR019818">
    <property type="entry name" value="IsoCit/isopropylmalate_DH_CS"/>
</dbReference>
<dbReference type="InterPro" id="IPR024084">
    <property type="entry name" value="IsoPropMal-DH-like_dom"/>
</dbReference>
<dbReference type="InterPro" id="IPR011829">
    <property type="entry name" value="TTC_DH"/>
</dbReference>
<dbReference type="NCBIfam" id="TIGR02089">
    <property type="entry name" value="TTC"/>
    <property type="match status" value="1"/>
</dbReference>
<dbReference type="PANTHER" id="PTHR43275">
    <property type="entry name" value="D-MALATE DEHYDROGENASE [DECARBOXYLATING]"/>
    <property type="match status" value="1"/>
</dbReference>
<dbReference type="PANTHER" id="PTHR43275:SF1">
    <property type="entry name" value="D-MALATE DEHYDROGENASE [DECARBOXYLATING]"/>
    <property type="match status" value="1"/>
</dbReference>
<dbReference type="Pfam" id="PF00180">
    <property type="entry name" value="Iso_dh"/>
    <property type="match status" value="1"/>
</dbReference>
<dbReference type="SMART" id="SM01329">
    <property type="entry name" value="Iso_dh"/>
    <property type="match status" value="1"/>
</dbReference>
<dbReference type="SUPFAM" id="SSF53659">
    <property type="entry name" value="Isocitrate/Isopropylmalate dehydrogenase-like"/>
    <property type="match status" value="1"/>
</dbReference>
<dbReference type="PROSITE" id="PS00470">
    <property type="entry name" value="IDH_IMDH"/>
    <property type="match status" value="1"/>
</dbReference>
<feature type="chain" id="PRO_0000083813" description="Probable tartrate dehydrogenase/decarboxylase TtuC">
    <location>
        <begin position="1"/>
        <end position="364"/>
    </location>
</feature>
<feature type="binding site" evidence="2">
    <location>
        <position position="222"/>
    </location>
    <ligand>
        <name>Mn(2+)</name>
        <dbReference type="ChEBI" id="CHEBI:29035"/>
    </ligand>
</feature>
<feature type="binding site" evidence="2">
    <location>
        <position position="246"/>
    </location>
    <ligand>
        <name>Mn(2+)</name>
        <dbReference type="ChEBI" id="CHEBI:29035"/>
    </ligand>
</feature>
<feature type="binding site" evidence="2">
    <location>
        <position position="250"/>
    </location>
    <ligand>
        <name>Mn(2+)</name>
        <dbReference type="ChEBI" id="CHEBI:29035"/>
    </ligand>
</feature>